<feature type="chain" id="PRO_1000049116" description="Homoserine kinase">
    <location>
        <begin position="1"/>
        <end position="292"/>
    </location>
</feature>
<feature type="binding site" evidence="1">
    <location>
        <begin position="84"/>
        <end position="94"/>
    </location>
    <ligand>
        <name>ATP</name>
        <dbReference type="ChEBI" id="CHEBI:30616"/>
    </ligand>
</feature>
<proteinExistence type="inferred from homology"/>
<evidence type="ECO:0000255" key="1">
    <source>
        <dbReference type="HAMAP-Rule" id="MF_00384"/>
    </source>
</evidence>
<reference key="1">
    <citation type="submission" date="2007-07" db="EMBL/GenBank/DDBJ databases">
        <title>Complete genome sequence of Campylobacter jejuni subsp doylei 269.97 isolated from human blood.</title>
        <authorList>
            <person name="Fouts D.E."/>
            <person name="Mongodin E.F."/>
            <person name="Puiu D."/>
            <person name="Sebastian Y."/>
            <person name="Miller W.G."/>
            <person name="Mandrell R.E."/>
            <person name="Lastovica A.J."/>
            <person name="Nelson K.E."/>
        </authorList>
    </citation>
    <scope>NUCLEOTIDE SEQUENCE [LARGE SCALE GENOMIC DNA]</scope>
    <source>
        <strain>ATCC BAA-1458 / RM4099 / 269.97</strain>
    </source>
</reference>
<name>KHSE_CAMJD</name>
<accession>A7H1L3</accession>
<sequence length="292" mass="32503">MKILVPATSANLGPGFDCLGLSLKLFNETQIQKSGVFSISIGGEGSDNIFLKKNNIFVNIFYEIYEKLSGKKDNFRFIFQNNIPLSRGLGSSSAVIVGAIASAYYMSGFKVEKKRILDEALIYENHPDNIAPATLGGFVCSLVEKNKVYSIKKEIDKDLAAVVVIPNLAMSTEQSRQALAKNLSFNDAVFNLSHASFLTACFLEKKYEFLKFASQDKLHEINRMKNLPELFEVQKFALENKALMSTLSGSGSSFFSLAFKDDALALAKKMQTKFKDFSVQYLEFDDNGFEIC</sequence>
<keyword id="KW-0028">Amino-acid biosynthesis</keyword>
<keyword id="KW-0067">ATP-binding</keyword>
<keyword id="KW-0963">Cytoplasm</keyword>
<keyword id="KW-0418">Kinase</keyword>
<keyword id="KW-0547">Nucleotide-binding</keyword>
<keyword id="KW-0791">Threonine biosynthesis</keyword>
<keyword id="KW-0808">Transferase</keyword>
<organism>
    <name type="scientific">Campylobacter jejuni subsp. doylei (strain ATCC BAA-1458 / RM4099 / 269.97)</name>
    <dbReference type="NCBI Taxonomy" id="360109"/>
    <lineage>
        <taxon>Bacteria</taxon>
        <taxon>Pseudomonadati</taxon>
        <taxon>Campylobacterota</taxon>
        <taxon>Epsilonproteobacteria</taxon>
        <taxon>Campylobacterales</taxon>
        <taxon>Campylobacteraceae</taxon>
        <taxon>Campylobacter</taxon>
    </lineage>
</organism>
<comment type="function">
    <text evidence="1">Catalyzes the ATP-dependent phosphorylation of L-homoserine to L-homoserine phosphate.</text>
</comment>
<comment type="catalytic activity">
    <reaction evidence="1">
        <text>L-homoserine + ATP = O-phospho-L-homoserine + ADP + H(+)</text>
        <dbReference type="Rhea" id="RHEA:13985"/>
        <dbReference type="ChEBI" id="CHEBI:15378"/>
        <dbReference type="ChEBI" id="CHEBI:30616"/>
        <dbReference type="ChEBI" id="CHEBI:57476"/>
        <dbReference type="ChEBI" id="CHEBI:57590"/>
        <dbReference type="ChEBI" id="CHEBI:456216"/>
        <dbReference type="EC" id="2.7.1.39"/>
    </reaction>
</comment>
<comment type="pathway">
    <text evidence="1">Amino-acid biosynthesis; L-threonine biosynthesis; L-threonine from L-aspartate: step 4/5.</text>
</comment>
<comment type="subcellular location">
    <subcellularLocation>
        <location evidence="1">Cytoplasm</location>
    </subcellularLocation>
</comment>
<comment type="similarity">
    <text evidence="1">Belongs to the GHMP kinase family. Homoserine kinase subfamily.</text>
</comment>
<protein>
    <recommendedName>
        <fullName evidence="1">Homoserine kinase</fullName>
        <shortName evidence="1">HK</shortName>
        <shortName evidence="1">HSK</shortName>
        <ecNumber evidence="1">2.7.1.39</ecNumber>
    </recommendedName>
</protein>
<gene>
    <name evidence="1" type="primary">thrB</name>
    <name type="ordered locus">JJD26997_0147</name>
</gene>
<dbReference type="EC" id="2.7.1.39" evidence="1"/>
<dbReference type="EMBL" id="CP000768">
    <property type="protein sequence ID" value="ABS43663.1"/>
    <property type="molecule type" value="Genomic_DNA"/>
</dbReference>
<dbReference type="SMR" id="A7H1L3"/>
<dbReference type="KEGG" id="cjd:JJD26997_0147"/>
<dbReference type="HOGENOM" id="CLU_041243_0_0_7"/>
<dbReference type="UniPathway" id="UPA00050">
    <property type="reaction ID" value="UER00064"/>
</dbReference>
<dbReference type="Proteomes" id="UP000002302">
    <property type="component" value="Chromosome"/>
</dbReference>
<dbReference type="GO" id="GO:0005737">
    <property type="term" value="C:cytoplasm"/>
    <property type="evidence" value="ECO:0007669"/>
    <property type="project" value="UniProtKB-SubCell"/>
</dbReference>
<dbReference type="GO" id="GO:0005524">
    <property type="term" value="F:ATP binding"/>
    <property type="evidence" value="ECO:0007669"/>
    <property type="project" value="UniProtKB-UniRule"/>
</dbReference>
<dbReference type="GO" id="GO:0004413">
    <property type="term" value="F:homoserine kinase activity"/>
    <property type="evidence" value="ECO:0007669"/>
    <property type="project" value="UniProtKB-UniRule"/>
</dbReference>
<dbReference type="GO" id="GO:0009088">
    <property type="term" value="P:threonine biosynthetic process"/>
    <property type="evidence" value="ECO:0007669"/>
    <property type="project" value="UniProtKB-UniRule"/>
</dbReference>
<dbReference type="Gene3D" id="3.30.230.10">
    <property type="match status" value="1"/>
</dbReference>
<dbReference type="Gene3D" id="3.30.70.890">
    <property type="entry name" value="GHMP kinase, C-terminal domain"/>
    <property type="match status" value="1"/>
</dbReference>
<dbReference type="HAMAP" id="MF_00384">
    <property type="entry name" value="Homoser_kinase"/>
    <property type="match status" value="1"/>
</dbReference>
<dbReference type="InterPro" id="IPR013750">
    <property type="entry name" value="GHMP_kinase_C_dom"/>
</dbReference>
<dbReference type="InterPro" id="IPR036554">
    <property type="entry name" value="GHMP_kinase_C_sf"/>
</dbReference>
<dbReference type="InterPro" id="IPR006204">
    <property type="entry name" value="GHMP_kinase_N_dom"/>
</dbReference>
<dbReference type="InterPro" id="IPR006203">
    <property type="entry name" value="GHMP_knse_ATP-bd_CS"/>
</dbReference>
<dbReference type="InterPro" id="IPR000870">
    <property type="entry name" value="Homoserine_kinase"/>
</dbReference>
<dbReference type="InterPro" id="IPR020568">
    <property type="entry name" value="Ribosomal_Su5_D2-typ_SF"/>
</dbReference>
<dbReference type="InterPro" id="IPR014721">
    <property type="entry name" value="Ribsml_uS5_D2-typ_fold_subgr"/>
</dbReference>
<dbReference type="NCBIfam" id="TIGR00191">
    <property type="entry name" value="thrB"/>
    <property type="match status" value="1"/>
</dbReference>
<dbReference type="PANTHER" id="PTHR20861:SF1">
    <property type="entry name" value="HOMOSERINE KINASE"/>
    <property type="match status" value="1"/>
</dbReference>
<dbReference type="PANTHER" id="PTHR20861">
    <property type="entry name" value="HOMOSERINE/4-DIPHOSPHOCYTIDYL-2-C-METHYL-D-ERYTHRITOL KINASE"/>
    <property type="match status" value="1"/>
</dbReference>
<dbReference type="Pfam" id="PF08544">
    <property type="entry name" value="GHMP_kinases_C"/>
    <property type="match status" value="1"/>
</dbReference>
<dbReference type="Pfam" id="PF00288">
    <property type="entry name" value="GHMP_kinases_N"/>
    <property type="match status" value="1"/>
</dbReference>
<dbReference type="PIRSF" id="PIRSF000676">
    <property type="entry name" value="Homoser_kin"/>
    <property type="match status" value="1"/>
</dbReference>
<dbReference type="PRINTS" id="PR00958">
    <property type="entry name" value="HOMSERKINASE"/>
</dbReference>
<dbReference type="SUPFAM" id="SSF55060">
    <property type="entry name" value="GHMP Kinase, C-terminal domain"/>
    <property type="match status" value="1"/>
</dbReference>
<dbReference type="SUPFAM" id="SSF54211">
    <property type="entry name" value="Ribosomal protein S5 domain 2-like"/>
    <property type="match status" value="1"/>
</dbReference>
<dbReference type="PROSITE" id="PS00627">
    <property type="entry name" value="GHMP_KINASES_ATP"/>
    <property type="match status" value="1"/>
</dbReference>